<name>ATG17_KLULA</name>
<protein>
    <recommendedName>
        <fullName>Autophagy-related protein 17</fullName>
    </recommendedName>
</protein>
<organism>
    <name type="scientific">Kluyveromyces lactis (strain ATCC 8585 / CBS 2359 / DSM 70799 / NBRC 1267 / NRRL Y-1140 / WM37)</name>
    <name type="common">Yeast</name>
    <name type="synonym">Candida sphaerica</name>
    <dbReference type="NCBI Taxonomy" id="284590"/>
    <lineage>
        <taxon>Eukaryota</taxon>
        <taxon>Fungi</taxon>
        <taxon>Dikarya</taxon>
        <taxon>Ascomycota</taxon>
        <taxon>Saccharomycotina</taxon>
        <taxon>Saccharomycetes</taxon>
        <taxon>Saccharomycetales</taxon>
        <taxon>Saccharomycetaceae</taxon>
        <taxon>Kluyveromyces</taxon>
    </lineage>
</organism>
<reference key="1">
    <citation type="journal article" date="2004" name="Nature">
        <title>Genome evolution in yeasts.</title>
        <authorList>
            <person name="Dujon B."/>
            <person name="Sherman D."/>
            <person name="Fischer G."/>
            <person name="Durrens P."/>
            <person name="Casaregola S."/>
            <person name="Lafontaine I."/>
            <person name="de Montigny J."/>
            <person name="Marck C."/>
            <person name="Neuveglise C."/>
            <person name="Talla E."/>
            <person name="Goffard N."/>
            <person name="Frangeul L."/>
            <person name="Aigle M."/>
            <person name="Anthouard V."/>
            <person name="Babour A."/>
            <person name="Barbe V."/>
            <person name="Barnay S."/>
            <person name="Blanchin S."/>
            <person name="Beckerich J.-M."/>
            <person name="Beyne E."/>
            <person name="Bleykasten C."/>
            <person name="Boisrame A."/>
            <person name="Boyer J."/>
            <person name="Cattolico L."/>
            <person name="Confanioleri F."/>
            <person name="de Daruvar A."/>
            <person name="Despons L."/>
            <person name="Fabre E."/>
            <person name="Fairhead C."/>
            <person name="Ferry-Dumazet H."/>
            <person name="Groppi A."/>
            <person name="Hantraye F."/>
            <person name="Hennequin C."/>
            <person name="Jauniaux N."/>
            <person name="Joyet P."/>
            <person name="Kachouri R."/>
            <person name="Kerrest A."/>
            <person name="Koszul R."/>
            <person name="Lemaire M."/>
            <person name="Lesur I."/>
            <person name="Ma L."/>
            <person name="Muller H."/>
            <person name="Nicaud J.-M."/>
            <person name="Nikolski M."/>
            <person name="Oztas S."/>
            <person name="Ozier-Kalogeropoulos O."/>
            <person name="Pellenz S."/>
            <person name="Potier S."/>
            <person name="Richard G.-F."/>
            <person name="Straub M.-L."/>
            <person name="Suleau A."/>
            <person name="Swennen D."/>
            <person name="Tekaia F."/>
            <person name="Wesolowski-Louvel M."/>
            <person name="Westhof E."/>
            <person name="Wirth B."/>
            <person name="Zeniou-Meyer M."/>
            <person name="Zivanovic Y."/>
            <person name="Bolotin-Fukuhara M."/>
            <person name="Thierry A."/>
            <person name="Bouchier C."/>
            <person name="Caudron B."/>
            <person name="Scarpelli C."/>
            <person name="Gaillardin C."/>
            <person name="Weissenbach J."/>
            <person name="Wincker P."/>
            <person name="Souciet J.-L."/>
        </authorList>
    </citation>
    <scope>NUCLEOTIDE SEQUENCE [LARGE SCALE GENOMIC DNA]</scope>
    <source>
        <strain>ATCC 8585 / CBS 2359 / DSM 70799 / NBRC 1267 / NRRL Y-1140 / WM37</strain>
    </source>
</reference>
<keyword id="KW-0072">Autophagy</keyword>
<keyword id="KW-0963">Cytoplasm</keyword>
<keyword id="KW-0472">Membrane</keyword>
<keyword id="KW-1185">Reference proteome</keyword>
<dbReference type="EMBL" id="CR382124">
    <property type="protein sequence ID" value="CAH00286.1"/>
    <property type="molecule type" value="Genomic_DNA"/>
</dbReference>
<dbReference type="RefSeq" id="XP_453190.1">
    <property type="nucleotide sequence ID" value="XM_453190.1"/>
</dbReference>
<dbReference type="SASBDB" id="Q6CS99"/>
<dbReference type="SMR" id="Q6CS99"/>
<dbReference type="DIP" id="DIP-61493N"/>
<dbReference type="FunCoup" id="Q6CS99">
    <property type="interactions" value="186"/>
</dbReference>
<dbReference type="IntAct" id="Q6CS99">
    <property type="interactions" value="3"/>
</dbReference>
<dbReference type="STRING" id="284590.Q6CS99"/>
<dbReference type="PaxDb" id="284590-Q6CS99"/>
<dbReference type="KEGG" id="kla:KLLA0_D02750g"/>
<dbReference type="eggNOG" id="ENOG502QQDW">
    <property type="taxonomic scope" value="Eukaryota"/>
</dbReference>
<dbReference type="HOGENOM" id="CLU_051526_0_0_1"/>
<dbReference type="InParanoid" id="Q6CS99"/>
<dbReference type="OMA" id="PENIWPN"/>
<dbReference type="Proteomes" id="UP000000598">
    <property type="component" value="Chromosome D"/>
</dbReference>
<dbReference type="GO" id="GO:1990316">
    <property type="term" value="C:Atg1/ULK1 kinase complex"/>
    <property type="evidence" value="ECO:0007669"/>
    <property type="project" value="TreeGrafter"/>
</dbReference>
<dbReference type="GO" id="GO:0034045">
    <property type="term" value="C:phagophore assembly site membrane"/>
    <property type="evidence" value="ECO:0007669"/>
    <property type="project" value="UniProtKB-SubCell"/>
</dbReference>
<dbReference type="GO" id="GO:0060090">
    <property type="term" value="F:molecular adaptor activity"/>
    <property type="evidence" value="ECO:0007669"/>
    <property type="project" value="TreeGrafter"/>
</dbReference>
<dbReference type="GO" id="GO:0030295">
    <property type="term" value="F:protein kinase activator activity"/>
    <property type="evidence" value="ECO:0007669"/>
    <property type="project" value="TreeGrafter"/>
</dbReference>
<dbReference type="GO" id="GO:0000045">
    <property type="term" value="P:autophagosome assembly"/>
    <property type="evidence" value="ECO:0007669"/>
    <property type="project" value="TreeGrafter"/>
</dbReference>
<dbReference type="GO" id="GO:0000422">
    <property type="term" value="P:autophagy of mitochondrion"/>
    <property type="evidence" value="ECO:0007669"/>
    <property type="project" value="TreeGrafter"/>
</dbReference>
<dbReference type="GO" id="GO:0034727">
    <property type="term" value="P:piecemeal microautophagy of the nucleus"/>
    <property type="evidence" value="ECO:0007669"/>
    <property type="project" value="TreeGrafter"/>
</dbReference>
<dbReference type="InterPro" id="IPR007240">
    <property type="entry name" value="Atg17"/>
</dbReference>
<dbReference type="InterPro" id="IPR045326">
    <property type="entry name" value="ATG17-like_dom"/>
</dbReference>
<dbReference type="PANTHER" id="PTHR28005">
    <property type="entry name" value="AUTOPHAGY-RELATED PROTEIN 17"/>
    <property type="match status" value="1"/>
</dbReference>
<dbReference type="PANTHER" id="PTHR28005:SF1">
    <property type="entry name" value="AUTOPHAGY-RELATED PROTEIN 17"/>
    <property type="match status" value="1"/>
</dbReference>
<dbReference type="Pfam" id="PF04108">
    <property type="entry name" value="ATG17_like"/>
    <property type="match status" value="1"/>
</dbReference>
<comment type="function">
    <text evidence="1">Autophagy-specific protein that functions in response to autophagy-inducing signals as a scaffold to recruit other ATG proteins to organize pre-autophagosomal structure (PAS) formation. Modulates the timing and magnitude of the autophagy response, such as the size of the sequestering vesicles. Plays particularly a role in pexophagy and nucleophagy (By similarity).</text>
</comment>
<comment type="subcellular location">
    <subcellularLocation>
        <location evidence="1">Cytoplasm</location>
    </subcellularLocation>
    <subcellularLocation>
        <location evidence="1">Preautophagosomal structure membrane</location>
        <topology evidence="1">Peripheral membrane protein</topology>
    </subcellularLocation>
</comment>
<comment type="similarity">
    <text evidence="2">Belongs to the ATG17 family.</text>
</comment>
<sequence length="423" mass="49864">MSDAATTIPSDEIDKLWNKARNQLVEAQVECEESLKILSKVRTEMDSSQKSRFKLKFILNCLVNQVEFFKNIMLEKCISTELIDNEWSKLVLVEIVNDVSYWQNEITTKMKILQGTKYDLTDDHSSLSDFICMDHVDILQQKIDEIPIIKQQVTNIRQHYKSIKDRIENQLVAVKLKKLRTYFDSHFSRDSKNNLFKLLESDYVTELNEFENELADFLRSITDHFDKCTILKEQQIPLPDLKELFQIVKKDDTQLENIRELVFETGLEVKAFSKKVNETISEIMDKIGGFHLLASKIVTELEKCEEYLSIFQKIANLVFVYKESCIKKIEQVQQLCEFYDKFKLGYKNLLRERDRRKATALQMEKILKECQEKLQALSDADLDQRQQFLLENGDYLPENIWPGYIDDMESMYSFEYSIHNVPN</sequence>
<feature type="chain" id="PRO_0000124561" description="Autophagy-related protein 17">
    <location>
        <begin position="1"/>
        <end position="423"/>
    </location>
</feature>
<gene>
    <name type="primary">ATG17</name>
    <name type="ordered locus">KLLA0D02750g</name>
</gene>
<evidence type="ECO:0000250" key="1"/>
<evidence type="ECO:0000305" key="2"/>
<accession>Q6CS99</accession>
<proteinExistence type="inferred from homology"/>